<comment type="function">
    <text evidence="1 15 21">Factor of infectivity and pathogenicity, required for optimal virus replication (PubMed:8151761). Alters numerous pathways of T-lymphocytes function and down-regulates immunity surface molecules in order to evade host defense and increase viral infectivity (PubMed:25585010). Alters the functionality of other immunity cells, like dendritic cells, monocytes/macrophages and NK cells (PubMed:25585010).</text>
</comment>
<comment type="function">
    <text evidence="1 2 4 8 10 11 12 16 17 18">In infected CD4(+) T-lymphocytes, down-regulates the surface MHC-I, mature MHC-II, CD4, CD28, CCR5 and CXCR4 molecules. Mediates internalization and degradation of host CD4 through the interaction of with the cytoplasmic tail of CD4, the recruitment of AP-2 (clathrin adapter protein complex 2), internalization through clathrin coated pits, and subsequent transport to endosomes and lysosomes for degradation. Diverts host MHC-I molecules to the trans-Golgi network-associated endosomal compartments by an endocytic pathway to finally target them for degradation. MHC-I down-regulation may involve AP-1 (clathrin adapter protein complex 1) or possibly Src family kinase-ZAP70/Syk-PI3K cascade recruited by PACS2. In consequence infected cells are masked for immune recognition by cytotoxic T-lymphocytes. Decreasing the number of immune receptors also prevents reinfection by more HIV particles (superinfection). Down-regulates host SERINC3 and SERINC5 thereby excluding these proteins from the viral particles. Virion infectivity is drastically higher when SERINC3 or SERINC5 are excluded from the viral envelope, because these host antiviral proteins impair the membrane fusion event necessary for subsequent virion penetration (PubMed:26416733, PubMed:26416734, PubMed:37474505).</text>
</comment>
<comment type="function">
    <text evidence="1 5">Bypasses host T-cell signaling by inducing a transcriptional program nearly identical to that of anti-CD3 cell activation. Interaction with TCR-zeta chain up-regulates the Fas ligand (FasL) (By similarity). Increasing surface FasL molecules and decreasing surface MHC-I molecules on infected CD4(+) cells send attacking cytotoxic CD8+ T-lymphocytes into apoptosis (PubMed:11298454).</text>
</comment>
<comment type="function">
    <text evidence="1 5 7">Plays a role in optimizing the host cell environment for viral replication without causing cell death by apoptosis. Protects the infected cells from apoptosis in order to keep them alive until the next virus generation is ready to strike. Inhibits the Fas and TNFR-mediated death signals by blocking MAP3K5/ASK1. Decreases the half-life of TP53, protecting the infected cell against p53-mediated apoptosis. Inhibits the apoptotic signals regulated by the Bcl-2 family proteins through the formation of a Nef/PI3-kinase/PAK2 complex that leads to activation of PAK2 and induces phosphorylation of host BAD.</text>
</comment>
<comment type="function">
    <text evidence="1 9">Extracellular Nef protein targets CD4(+) T-lymphocytes for apoptosis by interacting with CXCR4 surface receptors (PubMed:14990729).</text>
</comment>
<comment type="subunit">
    <text evidence="1 3 5 7 13 14 24">Monomer; cytosolic form. Homodimer; membrane bound form. Interacts with Nef associated p21-activated kinase (PAK2); this interaction activates PAK2. Associates with the Nef-MHC-I-AP1 complex; this complex is required for MHC-I internalization. Interacts (via C-terminus) with host PI3-kinase. Interacts with host PACS1; this interaction seems to be weak. Interacts with host PACS2. Interacts with host LCK and MAPK3; these interactions inhibit the kinase activity of the latter. Interacts with host ATP6V1H; this interaction may play a role in CD4 endocytosis. Associates with the CD4-Nef-AP2 complex; this complex is required for CD4 internalization. Interacts with host AP2 subunit alpha and AP2 subunit sigma2. Interacts with TCR-zeta chain; this interaction up-regulates the Fas ligand (FasL) surface expression. Interacts with host HCK, LYN, and SRC; these interactions activate the Src family kinases. Interacts with MAP3K5; this interaction inhibits the Fas and TNFR-mediated death signals. Interacts with beta-COP and PTE1. Interacts with human RACK1; this increases Nef phosphorylation by PKC. Interacts with TP53; this interaction decreases the half-life of TP53, protecting the infected cell against p53-mediated apoptosis.</text>
</comment>
<comment type="interaction">
    <interactant intactId="EBI-15672419">
        <id>P03406</id>
    </interactant>
    <interactant intactId="EBI-346340">
        <id>P08631</id>
        <label>HCK</label>
    </interactant>
    <organismsDiffer>true</organismsDiffer>
    <experiments>2</experiments>
</comment>
<comment type="subcellular location">
    <subcellularLocation>
        <location evidence="1 14">Host cell membrane</location>
        <topology evidence="1 14">Lipid-anchor</topology>
        <orientation evidence="1 14">Cytoplasmic side</orientation>
    </subcellularLocation>
    <subcellularLocation>
        <location evidence="1 22 25">Virion</location>
    </subcellularLocation>
    <subcellularLocation>
        <location evidence="1">Secreted</location>
    </subcellularLocation>
    <subcellularLocation>
        <location evidence="1 14">Host Golgi apparatus membrane</location>
    </subcellularLocation>
    <text evidence="1 14 22 25">TGN localization requires PACS1. Associates with the inner plasma membrane through its N-terminal domain. Nef stimulates its own export via the release of exosomes. Incorporated in virions at a rate of about 10 molecules per virion, where it is cleaved.</text>
</comment>
<comment type="induction">
    <text evidence="1">Expressed early in the viral replication cycle.</text>
</comment>
<comment type="domain">
    <text evidence="1 7 21">The N-terminal domain is composed of the N-myristoyl glycine and of a cluster of positively charged amino acids. It is required for inner plasma membrane targeting of Nef and virion incorporation, and thereby for infectivity. This domain is also involved in binding to TP53.</text>
</comment>
<comment type="domain">
    <text evidence="1 20 23">The SH3-binding domain constituted of PxxP motifs mediates binding to several Src family proteins thereby regulating their tyrosine kinase activity. The same motifs also mediates the association with MAPK3, PI3-kinase and TCR-zeta.</text>
</comment>
<comment type="domain">
    <text evidence="1 13">The dileucine internalization motif and a diacidic motif seem to be required for binding to AP-2.</text>
</comment>
<comment type="domain">
    <text evidence="1">The acidic region binds to the sorting protein PACS-2, which targets Nef to the paranuclear region, enabling the PxxP motif to direct assembly of an SFK/ZAP-70/PI3K complex that accelerates endocytosis of cell-surface MHC-I.</text>
</comment>
<comment type="PTM">
    <text evidence="1 19 22">The virion-associated Nef proteins are cleaved by the viral protease to release the soluble C-terminal core protein. Nef is probably cleaved concomitantly with viral structural proteins on maturation of virus particles.</text>
</comment>
<comment type="PTM">
    <text evidence="1 21">Myristoylated.</text>
</comment>
<comment type="PTM">
    <text evidence="1">Phosphorylated on serine residues, probably by host PKCdelta and theta.</text>
</comment>
<comment type="miscellaneous">
    <text>The infectious clone pNL4-3 is a chimeric provirus that consists of DNA from HIV isolates NY5 (5' half) and BRU (3' half).</text>
</comment>
<comment type="miscellaneous">
    <text evidence="1">HIV-1 lineages are divided in three main groups, M (for Major), O (for Outlier), and N (for New, or Non-M, Non-O). The vast majority of strains found worldwide belong to the group M. Group O seems to be endemic to and largely confined to Cameroon and neighboring countries in West Central Africa, where these viruses represent a small minority of HIV-1 strains. The group N is represented by a limited number of isolates from Cameroonian persons. The group M is further subdivided in 9 clades or subtypes (A to D, F to H, J and K).</text>
</comment>
<comment type="similarity">
    <text evidence="1">Belongs to the lentivirus primate group Nef protein family.</text>
</comment>
<evidence type="ECO:0000255" key="1">
    <source>
        <dbReference type="HAMAP-Rule" id="MF_04078"/>
    </source>
</evidence>
<evidence type="ECO:0000269" key="2">
    <source>
    </source>
</evidence>
<evidence type="ECO:0000269" key="3">
    <source>
    </source>
</evidence>
<evidence type="ECO:0000269" key="4">
    <source>
    </source>
</evidence>
<evidence type="ECO:0000269" key="5">
    <source>
    </source>
</evidence>
<evidence type="ECO:0000269" key="6">
    <source>
    </source>
</evidence>
<evidence type="ECO:0000269" key="7">
    <source>
    </source>
</evidence>
<evidence type="ECO:0000269" key="8">
    <source>
    </source>
</evidence>
<evidence type="ECO:0000269" key="9">
    <source>
    </source>
</evidence>
<evidence type="ECO:0000269" key="10">
    <source>
    </source>
</evidence>
<evidence type="ECO:0000269" key="11">
    <source>
    </source>
</evidence>
<evidence type="ECO:0000269" key="12">
    <source>
    </source>
</evidence>
<evidence type="ECO:0000269" key="13">
    <source>
    </source>
</evidence>
<evidence type="ECO:0000269" key="14">
    <source>
    </source>
</evidence>
<evidence type="ECO:0000269" key="15">
    <source>
    </source>
</evidence>
<evidence type="ECO:0000269" key="16">
    <source>
    </source>
</evidence>
<evidence type="ECO:0000269" key="17">
    <source>
    </source>
</evidence>
<evidence type="ECO:0000269" key="18">
    <source>
    </source>
</evidence>
<evidence type="ECO:0000269" key="19">
    <source>
    </source>
</evidence>
<evidence type="ECO:0000269" key="20">
    <source>
    </source>
</evidence>
<evidence type="ECO:0000269" key="21">
    <source>
    </source>
</evidence>
<evidence type="ECO:0000269" key="22">
    <source>
    </source>
</evidence>
<evidence type="ECO:0000269" key="23">
    <source>
    </source>
</evidence>
<evidence type="ECO:0000269" key="24">
    <source>
    </source>
</evidence>
<evidence type="ECO:0000269" key="25">
    <source>
    </source>
</evidence>
<evidence type="ECO:0007829" key="26">
    <source>
        <dbReference type="PDB" id="1AVZ"/>
    </source>
</evidence>
<evidence type="ECO:0007829" key="27">
    <source>
        <dbReference type="PDB" id="1EFN"/>
    </source>
</evidence>
<evidence type="ECO:0007829" key="28">
    <source>
        <dbReference type="PDB" id="6URI"/>
    </source>
</evidence>
<accession>P03406</accession>
<organismHost>
    <name type="scientific">Homo sapiens</name>
    <name type="common">Human</name>
    <dbReference type="NCBI Taxonomy" id="9606"/>
</organismHost>
<gene>
    <name evidence="1" type="primary">nef</name>
</gene>
<feature type="initiator methionine" description="Removed; by host" evidence="1">
    <location>
        <position position="1"/>
    </location>
</feature>
<feature type="chain" id="PRO_0000038335" description="Protein Nef" evidence="1">
    <location>
        <begin position="2"/>
        <end position="206"/>
    </location>
</feature>
<feature type="chain" id="PRO_0000038336" description="C-terminal core protein" evidence="1">
    <location>
        <begin position="58"/>
        <end position="206"/>
    </location>
</feature>
<feature type="region of interest" description="Acidic; interacts with host PACS1 and PACS2; stabilizes the interaction of NEF/MHC-I with host AP1M1; necessary for MHC-I internalization" evidence="1">
    <location>
        <begin position="62"/>
        <end position="65"/>
    </location>
</feature>
<feature type="region of interest" description="SH3-binding; interaction with Src family tyrosine kinases" evidence="1 20 23">
    <location>
        <begin position="69"/>
        <end position="78"/>
    </location>
</feature>
<feature type="region of interest" description="Mediates dimerization, Nef-PTE1 interaction" evidence="1">
    <location>
        <begin position="108"/>
        <end position="124"/>
    </location>
</feature>
<feature type="region of interest" description="Mediates dimerization, Nef-PTE1 interaction, Nef-induced CD4 and MHC-I down-regulation and enhancement of infectivity" evidence="14">
    <location>
        <begin position="108"/>
        <end position="124"/>
    </location>
</feature>
<feature type="region of interest" description="Binding to ATP6V1H" evidence="1">
    <location>
        <begin position="148"/>
        <end position="180"/>
    </location>
</feature>
<feature type="short sequence motif" description="PxxP; stabilizes the interaction of NEF/MHC-I with host AP1M1; necessary for MHC-I internalization" evidence="1">
    <location>
        <begin position="72"/>
        <end position="75"/>
    </location>
</feature>
<feature type="short sequence motif" description="Dileucine internalization motif; necessary for CD4 internalization" evidence="1">
    <location>
        <begin position="164"/>
        <end position="165"/>
    </location>
</feature>
<feature type="short sequence motif" description="Diacidic; necessary for CD4 internalization" evidence="1 13">
    <location>
        <begin position="174"/>
        <end position="175"/>
    </location>
</feature>
<feature type="site" description="Might play a role in AP-1 recruitment to the Nef-MHC-I complex" evidence="1">
    <location>
        <position position="20"/>
    </location>
</feature>
<feature type="site" description="Cleavage; by viral protease" evidence="1 19">
    <location>
        <begin position="57"/>
        <end position="58"/>
    </location>
</feature>
<feature type="modified residue" description="Phosphoserine; by host" evidence="1">
    <location>
        <position position="6"/>
    </location>
</feature>
<feature type="lipid moiety-binding region" description="N-myristoyl glycine; by host" evidence="1">
    <location>
        <position position="2"/>
    </location>
</feature>
<feature type="sequence variant" description="In strain: Clone pNL4-3.">
    <original>V</original>
    <variation>I</variation>
    <location>
        <position position="11"/>
    </location>
</feature>
<feature type="sequence variant" description="In strain: Clone pNL4-3.">
    <original>T</original>
    <variation>A</variation>
    <location>
        <position position="15"/>
    </location>
</feature>
<feature type="sequence variant" description="In strain: Clone pNL4-3.">
    <original>A</original>
    <variation>V</variation>
    <location>
        <position position="33"/>
    </location>
</feature>
<feature type="sequence variant" description="In strain: Clone pNL4-3.">
    <original>T</original>
    <variation>N</variation>
    <location>
        <position position="51"/>
    </location>
</feature>
<feature type="mutagenesis site" description="70% loss of infectivity." evidence="21">
    <original>GG</original>
    <variation>AA</variation>
    <location>
        <begin position="2"/>
        <end position="3"/>
    </location>
</feature>
<feature type="mutagenesis site" description="Amost complete loss of Nef-induced MHC-I down-regulation." evidence="2">
    <original>M</original>
    <variation>A</variation>
    <location>
        <position position="20"/>
    </location>
</feature>
<feature type="mutagenesis site" description="Amost complete loss of Nef-induced MHC-I down-regulation." evidence="2">
    <original>M</original>
    <variation>R</variation>
    <location>
        <position position="20"/>
    </location>
</feature>
<feature type="mutagenesis site" description="Increases infectivity by a factor of three." evidence="6">
    <original>T</original>
    <variation>R</variation>
    <location>
        <position position="71"/>
    </location>
</feature>
<feature type="mutagenesis site" description="Complete loss of binding to HCK SH3 domain and altered viral growth; when associated with P-76. No effect on Nef-induced CD4 down-regulation." evidence="20">
    <original>P</original>
    <variation>A</variation>
    <location>
        <position position="72"/>
    </location>
</feature>
<feature type="mutagenesis site" description="Complete loss of binding to HCK SH3 domain and altered viral growth; when associated with P-73. No effect on Nef-induced CD4 down-regulation." evidence="20">
    <original>P</original>
    <variation>A</variation>
    <location>
        <position position="75"/>
    </location>
</feature>
<feature type="mutagenesis site" description="Complete loss of binding to HCK SH3 domain and altered viral growth. No effect on Nef-induced CD4 down-modulation." evidence="20">
    <original>P</original>
    <variation>A</variation>
    <location>
        <position position="147"/>
    </location>
</feature>
<feature type="mutagenesis site" description="No effect." evidence="20">
    <original>P</original>
    <variation>A</variation>
    <location>
        <position position="150"/>
    </location>
</feature>
<feature type="mutagenesis site" description="Loss of interaction with AP-2 complex." evidence="13">
    <original>LL</original>
    <variation>AA</variation>
    <location>
        <begin position="164"/>
        <end position="165"/>
    </location>
</feature>
<feature type="mutagenesis site" description="Loss of interaction with AP-2 complex." evidence="13">
    <original>DD</original>
    <variation>AA</variation>
    <location>
        <begin position="174"/>
        <end position="175"/>
    </location>
</feature>
<feature type="turn" evidence="28">
    <location>
        <begin position="49"/>
        <end position="51"/>
    </location>
</feature>
<feature type="helix" evidence="28">
    <location>
        <begin position="53"/>
        <end position="58"/>
    </location>
</feature>
<feature type="helix" evidence="28">
    <location>
        <begin position="63"/>
        <end position="66"/>
    </location>
</feature>
<feature type="helix" evidence="27">
    <location>
        <begin position="81"/>
        <end position="93"/>
    </location>
</feature>
<feature type="turn" evidence="26">
    <location>
        <begin position="97"/>
        <end position="99"/>
    </location>
</feature>
<feature type="helix" evidence="27">
    <location>
        <begin position="104"/>
        <end position="118"/>
    </location>
</feature>
<feature type="strand" evidence="27">
    <location>
        <begin position="130"/>
        <end position="132"/>
    </location>
</feature>
<feature type="strand" evidence="27">
    <location>
        <begin position="136"/>
        <end position="138"/>
    </location>
</feature>
<feature type="strand" evidence="27">
    <location>
        <begin position="143"/>
        <end position="147"/>
    </location>
</feature>
<feature type="helix" evidence="28">
    <location>
        <begin position="150"/>
        <end position="156"/>
    </location>
</feature>
<feature type="helix" evidence="28">
    <location>
        <begin position="167"/>
        <end position="169"/>
    </location>
</feature>
<feature type="strand" evidence="28">
    <location>
        <begin position="170"/>
        <end position="172"/>
    </location>
</feature>
<feature type="strand" evidence="27">
    <location>
        <begin position="181"/>
        <end position="185"/>
    </location>
</feature>
<feature type="helix" evidence="27">
    <location>
        <begin position="187"/>
        <end position="190"/>
    </location>
</feature>
<feature type="helix" evidence="27">
    <location>
        <begin position="194"/>
        <end position="198"/>
    </location>
</feature>
<feature type="helix" evidence="27">
    <location>
        <begin position="200"/>
        <end position="202"/>
    </location>
</feature>
<protein>
    <recommendedName>
        <fullName evidence="1">Protein Nef</fullName>
    </recommendedName>
    <alternativeName>
        <fullName evidence="1">3'ORF</fullName>
    </alternativeName>
    <alternativeName>
        <fullName evidence="1">Negative factor</fullName>
        <shortName evidence="1">F-protein</shortName>
    </alternativeName>
    <component>
        <recommendedName>
            <fullName evidence="1">C-terminal core protein</fullName>
        </recommendedName>
    </component>
</protein>
<keyword id="KW-0002">3D-structure</keyword>
<keyword id="KW-0014">AIDS</keyword>
<keyword id="KW-0053">Apoptosis</keyword>
<keyword id="KW-0903">Direct protein sequencing</keyword>
<keyword id="KW-0244">Early protein</keyword>
<keyword id="KW-1032">Host cell membrane</keyword>
<keyword id="KW-1040">Host Golgi apparatus</keyword>
<keyword id="KW-1043">Host membrane</keyword>
<keyword id="KW-0945">Host-virus interaction</keyword>
<keyword id="KW-1080">Inhibition of host adaptive immune response by virus</keyword>
<keyword id="KW-1083">Inhibition of host autophagy by virus</keyword>
<keyword id="KW-1115">Inhibition of host MHC class I molecule presentation by virus</keyword>
<keyword id="KW-1116">Inhibition of host MHC class II molecule presentation by virus</keyword>
<keyword id="KW-0449">Lipoprotein</keyword>
<keyword id="KW-0472">Membrane</keyword>
<keyword id="KW-0519">Myristate</keyword>
<keyword id="KW-0597">Phosphoprotein</keyword>
<keyword id="KW-1185">Reference proteome</keyword>
<keyword id="KW-0964">Secreted</keyword>
<keyword id="KW-0729">SH3-binding</keyword>
<keyword id="KW-0899">Viral immunoevasion</keyword>
<keyword id="KW-0946">Virion</keyword>
<keyword id="KW-0843">Virulence</keyword>
<name>NEF_HV1BR</name>
<sequence>MGGKWSKSSVVGWPTVRERMRRAEPAADGVGAASRDLEKHGAITSSNTAATNAACAWLEAQEEEEVGFPVTPQVPLRPMTYKAAVDLSHFLKEKGGLEGLIHSQRRQDILDLWIYHTQGYFPDWQNYTPGPGVRYPLTFGWCYKLVPVEPDKVEEANKGENTSLLHPVSLHGMDDPEREVLEWRFDSRLAFHHVARELHPEYFKNC</sequence>
<reference key="1">
    <citation type="journal article" date="1985" name="Cell">
        <title>Nucleotide sequence of the AIDS virus, LAV.</title>
        <authorList>
            <person name="Wain-Hobson S."/>
            <person name="Sonigo P."/>
            <person name="Danos O."/>
            <person name="Cole S."/>
            <person name="Alizon M."/>
        </authorList>
    </citation>
    <scope>NUCLEOTIDE SEQUENCE</scope>
</reference>
<reference key="2">
    <citation type="submission" date="1988-06" db="EMBL/GenBank/DDBJ databases">
        <authorList>
            <person name="Buckler C.E."/>
            <person name="Buckler-White A.J."/>
            <person name="Willey R.L."/>
            <person name="McCoy J."/>
        </authorList>
    </citation>
    <scope>NUCLEOTIDE SEQUENCE</scope>
    <source>
        <strain>Clone pNL4-3</strain>
    </source>
</reference>
<reference key="3">
    <citation type="journal article" date="1995" name="FEBS Lett.">
        <title>Cleavage of recombinant and cell derived human immunodeficiency virus 1 (HIV-1) Nef protein by HIV-1 protease.</title>
        <authorList>
            <person name="Gaedigk-Nitschko K."/>
            <person name="Schoen A."/>
            <person name="Wachinger G."/>
            <person name="Erfle V."/>
            <person name="Kohleisen B."/>
        </authorList>
    </citation>
    <scope>PROTEIN SEQUENCE OF 56-68</scope>
    <scope>CLEAVAGE BY VIRAL PROTEASE</scope>
</reference>
<reference key="4">
    <citation type="journal article" date="1994" name="J. Virol.">
        <title>Optimal infectivity in vitro of human immunodeficiency virus type 1 requires an intact nef gene.</title>
        <authorList>
            <person name="Chowers M.Y."/>
            <person name="Spina C.A."/>
            <person name="Kwoh T.J."/>
            <person name="Fitch N.J.S."/>
            <person name="Richman D.D."/>
            <person name="Guatelli J.C."/>
        </authorList>
    </citation>
    <scope>MYRISTOYLATION AT GLY-2</scope>
    <scope>FUNCTION IN VIRULENCE</scope>
    <scope>MUTAGENESIS OF 2-GLY-GLY-3</scope>
    <source>
        <strain>Clone pNL4-3</strain>
    </source>
</reference>
<reference key="5">
    <citation type="journal article" date="1994" name="Cell">
        <title>Nef induces CD4 endocytosis: requirement for a critical dileucine motif in the membrane-proximal CD4 cytoplasmic domain.</title>
        <authorList>
            <person name="Aiken C."/>
            <person name="Konner J."/>
            <person name="Landau N.R."/>
            <person name="Lenburg M.E."/>
            <person name="Trono D."/>
        </authorList>
    </citation>
    <scope>FUNCTION</scope>
    <scope>DI-LEUCINE MOTIF</scope>
</reference>
<reference key="6">
    <citation type="journal article" date="1995" name="EMBO J.">
        <title>Proline-rich (PxxP) motifs in HIV-1 Nef bind to SH3 domains of a subset of Src kinases and are required for the enhanced growth of Nef+ viruses but not for down-regulation of CD4.</title>
        <authorList>
            <person name="Saksela K."/>
            <person name="Cheng G."/>
            <person name="Baltimore D."/>
        </authorList>
    </citation>
    <scope>SH3-BINDING REGION</scope>
    <scope>MUTAGENESIS OF PRO-72; PRO-75; PRO-147 AND PRO-150</scope>
</reference>
<reference key="7">
    <citation type="journal article" date="1996" name="J. Virol.">
        <title>Human immunodeficiency virus type 1 Nef binds directly to LCK and mitogen-activated protein kinase, inhibiting kinase activity.</title>
        <authorList>
            <person name="Greenway A.L."/>
            <person name="Azad A."/>
            <person name="Mills J."/>
            <person name="McPhee D.A."/>
        </authorList>
    </citation>
    <scope>INTERACTION WITH HUMAN LCK AND HUMAN MAPK3</scope>
</reference>
<reference key="8">
    <citation type="journal article" date="1996" name="Virology">
        <title>Human immunodeficiency virus type 1 Nef protein is incorporated into virus particles and specifically cleaved by the viral proteinase.</title>
        <authorList>
            <person name="Welker R."/>
            <person name="Kottler H."/>
            <person name="Kalbitzer H.R."/>
            <person name="Kraeusslich H.-G."/>
        </authorList>
    </citation>
    <scope>SUBCELLULAR LOCATION</scope>
    <scope>CLEAVAGE BY VIRAL PROTEASE</scope>
    <source>
        <strain>Clone pNL4-3</strain>
    </source>
</reference>
<reference key="9">
    <citation type="journal article" date="1998" name="J. Virol.">
        <title>Virion incorporation of human immunodeficiency virus type 1 Nef is mediated by a bipartite membrane-targeting signal: analysis of its role in enhancement of viral infectivity.</title>
        <authorList>
            <person name="Welker R."/>
            <person name="Harris M."/>
            <person name="Cardel B."/>
            <person name="Kraeusslich H.-G."/>
        </authorList>
    </citation>
    <scope>SUBCELLULAR LOCATION</scope>
    <scope>N-TERMINAL DOMAIN</scope>
    <source>
        <strain>Clone pNL4-3</strain>
    </source>
</reference>
<reference key="10">
    <citation type="journal article" date="2000" name="J. Virol.">
        <title>Nef-induced major histocompatibility complex class I down-regulation is functionally dissociated from its virion incorporation, enhancement of viral infectivity, and CD4 down-regulation.</title>
        <authorList>
            <person name="Akari H."/>
            <person name="Arold S."/>
            <person name="Fukumori T."/>
            <person name="Okazaki T."/>
            <person name="Strebel K."/>
            <person name="Adachi A."/>
        </authorList>
    </citation>
    <scope>FUNCTION</scope>
    <scope>MUTAGENESIS OF MET-20</scope>
    <source>
        <strain>clone pNL-432</strain>
    </source>
</reference>
<reference key="11">
    <citation type="journal article" date="2000" name="J. Virol.">
        <title>Lentivirus Nef specifically activates Pak2.</title>
        <authorList>
            <person name="Arora V.K."/>
            <person name="Molina R.P."/>
            <person name="Foster J.L."/>
            <person name="Blakemore J.L."/>
            <person name="Chernoff J."/>
            <person name="Fredericksen B.L."/>
            <person name="Garcia J.V."/>
        </authorList>
    </citation>
    <scope>FUNCTION</scope>
    <scope>INTERACTION WITH HUMAN PAK2</scope>
</reference>
<reference key="12">
    <citation type="journal article" date="2001" name="EMBO J.">
        <title>Mechanism for down-regulation of CD28 by Nef.</title>
        <authorList>
            <person name="Swigut T."/>
            <person name="Shohdy N."/>
            <person name="Skowronski J."/>
        </authorList>
    </citation>
    <scope>FUNCTION</scope>
    <source>
        <strain>Clone pNL4-3</strain>
    </source>
</reference>
<reference key="13">
    <citation type="journal article" date="2001" name="Nature">
        <title>HIV-1 Nef inhibits ASK1-dependent death signalling providing a potential mechanism for protecting the infected host cell.</title>
        <authorList>
            <person name="Geleziunas R."/>
            <person name="Xu W."/>
            <person name="Takeda K."/>
            <person name="Ichijo H."/>
            <person name="Greene W.C."/>
        </authorList>
    </citation>
    <scope>FUNCTION</scope>
    <scope>INTERACTION WITH HUMAN MAP3K5</scope>
</reference>
<reference key="14">
    <citation type="journal article" date="2001" name="Curr. Biol.">
        <title>A natural variability in the proline-rich motif of Nef modulates HIV-1 replication in primary T cells.</title>
        <authorList>
            <person name="Fackler O.T."/>
            <person name="Wolf D."/>
            <person name="Weber H.O."/>
            <person name="Laffert B."/>
            <person name="D'Aloja P."/>
            <person name="Schuler-Thurner B."/>
            <person name="Geffin R."/>
            <person name="Saksela K."/>
            <person name="Geyer M."/>
            <person name="Peterlin B.M."/>
            <person name="Schuler G."/>
            <person name="Baur A.S."/>
        </authorList>
    </citation>
    <scope>MUTAGENESIS OF THR-71</scope>
    <source>
        <strain>Clone pNL4-3</strain>
    </source>
</reference>
<reference key="15">
    <citation type="journal article" date="2002" name="J. Virol.">
        <title>Human immunodeficiency virus type 1 Nef binds to tumor suppressor p53 and protects cells against p53-mediated apoptosis.</title>
        <authorList>
            <person name="Greenway A.L."/>
            <person name="McPhee D.A."/>
            <person name="Allen K."/>
            <person name="Johnstone R."/>
            <person name="Holloway G."/>
            <person name="Mills J."/>
            <person name="Azad A."/>
            <person name="Sankovich S."/>
            <person name="Lambert P."/>
        </authorList>
    </citation>
    <scope>FUNCTION</scope>
    <scope>INTERACTION WITH HOST TP53</scope>
    <source>
        <strain>Clone pNL4-3</strain>
    </source>
</reference>
<reference key="16">
    <citation type="journal article" date="2004" name="J. Virol.">
        <title>Extracellular Nef protein targets CD4+ T cells for apoptosis by interacting with CXCR4 surface receptors.</title>
        <authorList>
            <person name="James C.O."/>
            <person name="Huang M.B."/>
            <person name="Khan M."/>
            <person name="Garcia-Barrio M."/>
            <person name="Powell M.D."/>
            <person name="Bond V.C."/>
        </authorList>
    </citation>
    <scope>FUNCTION</scope>
    <source>
        <strain>Clone pNL4-3</strain>
    </source>
</reference>
<reference key="17">
    <citation type="journal article" date="2004" name="Mol. Biol. Cell">
        <title>HIV Nef-mediated major histocompatibility complex class I down-modulation is independent of Arf6 activity.</title>
        <authorList>
            <person name="Larsen J.E."/>
            <person name="Massol R.H."/>
            <person name="Nieland T.J.F."/>
            <person name="Kirchhausen T."/>
        </authorList>
    </citation>
    <scope>FUNCTION</scope>
    <source>
        <strain>Clone pNL4-3</strain>
    </source>
</reference>
<reference key="18">
    <citation type="journal article" date="2005" name="Curr. Biol.">
        <title>The Nef protein of human immunodeficiency virus establishes superinfection immunity by a dual strategy to downregulate cell-surface CCR5 and CD4.</title>
        <authorList>
            <person name="Michel N."/>
            <person name="Allespach I."/>
            <person name="Venzke S."/>
            <person name="Fackler O.T."/>
            <person name="Keppler O.T."/>
        </authorList>
    </citation>
    <scope>FUNCTION</scope>
    <source>
        <strain>Clone pNL4-3</strain>
    </source>
</reference>
<reference key="19">
    <citation type="journal article" date="2006" name="J. Virol.">
        <title>Expression of Nef downregulates CXCR4, the major coreceptor of human immunodeficiency virus, from the surfaces of target cells and thereby enhances resistance to superinfection.</title>
        <authorList>
            <person name="Venzke S."/>
            <person name="Michel N."/>
            <person name="Allespach I."/>
            <person name="Fackler O.T."/>
            <person name="Keppler O.T."/>
        </authorList>
    </citation>
    <scope>FUNCTION</scope>
    <source>
        <strain>Clone pNL4-3</strain>
    </source>
</reference>
<reference key="20">
    <citation type="journal article" date="2007" name="Cell Host Microbe">
        <title>HIV-1 Nef assembles a Src family kinase-ZAP-70/Syk-PI3K cascade to downregulate cell-surface MHC-I.</title>
        <authorList>
            <person name="Hung C.H."/>
            <person name="Thomas L."/>
            <person name="Ruby C.E."/>
            <person name="Atkins K.M."/>
            <person name="Morris N.P."/>
            <person name="Knight Z.A."/>
            <person name="Scholz I."/>
            <person name="Barklis E."/>
            <person name="Weinberg A.D."/>
            <person name="Shokat K.M."/>
            <person name="Thomas G."/>
        </authorList>
    </citation>
    <scope>FUNCTION</scope>
    <source>
        <strain>Clone pNL4-3</strain>
    </source>
</reference>
<reference key="21">
    <citation type="journal article" date="2008" name="J. Virol.">
        <title>A diacidic motif in human immunodeficiency virus type 1 Nef is a novel determinant of binding to AP-2.</title>
        <authorList>
            <person name="Lindwasser O.W."/>
            <person name="Smith W.J."/>
            <person name="Chaudhuri R."/>
            <person name="Yang P."/>
            <person name="Hurley J.H."/>
            <person name="Bonifacino J.S."/>
        </authorList>
    </citation>
    <scope>DIACIDIC MOTIF</scope>
    <scope>MUTAGENESIS OF 164-LEU-LEU-165 AND 174-ASP-ASP-175</scope>
    <scope>INTERACTION WITH HOST AP-2 COMPLEX</scope>
</reference>
<reference key="22">
    <citation type="journal article" date="2009" name="J. Virol.">
        <title>A basic patch on alpha-adaptin is required for binding of human immunodeficiency virus type 1 Nef and cooperative assembly of a CD4-Nef-AP-2 complex.</title>
        <authorList>
            <person name="Chaudhuri R."/>
            <person name="Mattera R."/>
            <person name="Lindwasser O.W."/>
            <person name="Robinson M.S."/>
            <person name="Bonifacino J.S."/>
        </authorList>
    </citation>
    <scope>IDENTIFICATION IN A CD4-NEF-AP2 COMPLEX</scope>
    <source>
        <strain>Clone pNL4-3</strain>
    </source>
</reference>
<reference key="23">
    <citation type="journal article" date="2015" name="Biochim. Biophys. Acta">
        <title>HIV-1 Nef: a master manipulator of the membrane trafficking machinery mediating immune evasion.</title>
        <authorList>
            <person name="Pawlak E.N."/>
            <person name="Dikeakos J.D."/>
        </authorList>
    </citation>
    <scope>REVIEW</scope>
</reference>
<reference key="24">
    <citation type="journal article" date="2015" name="Nature">
        <title>HIV-1 Nef promotes infection by excluding SERINC5 from virion incorporation.</title>
        <authorList>
            <person name="Rosa A."/>
            <person name="Chande A."/>
            <person name="Ziglio S."/>
            <person name="De Sanctis V."/>
            <person name="Bertorelli R."/>
            <person name="Goh S.L."/>
            <person name="McCauley S.M."/>
            <person name="Nowosielska A."/>
            <person name="Antonarakis S.E."/>
            <person name="Luban J."/>
            <person name="Santoni F.A."/>
            <person name="Pizzato M."/>
        </authorList>
    </citation>
    <scope>FUNCTION</scope>
    <source>
        <strain>Clone pNL4-3</strain>
    </source>
</reference>
<reference key="25">
    <citation type="journal article" date="2015" name="Nature">
        <title>SERINC3 and SERINC5 restrict HIV-1 infectivity and are counteracted by Nef.</title>
        <authorList>
            <person name="Usami Y."/>
            <person name="Wu Y."/>
            <person name="Goettlinger H.G."/>
        </authorList>
    </citation>
    <scope>FUNCTION</scope>
    <source>
        <strain>Clone pNL4-3</strain>
    </source>
</reference>
<reference key="26">
    <citation type="journal article" date="2009" name="J. Mol. Biol.">
        <title>HIV-1 Nef dimerization is required for Nef-mediated receptor down-regulation and viral replication.</title>
        <authorList>
            <person name="Poe J.A."/>
            <person name="Smithgall T.E."/>
        </authorList>
    </citation>
    <scope>SUBUNIT</scope>
    <scope>SUBCELLULAR LOCATION</scope>
    <source>
        <strain>Clone pNL4-3</strain>
    </source>
</reference>
<reference key="27">
    <citation type="journal article" date="2023" name="Nat. Commun.">
        <title>Antiviral HIV-1 SERINC restriction factors disrupt virus membrane asymmetry.</title>
        <authorList>
            <person name="Leonhardt S.A."/>
            <person name="Purdy M.D."/>
            <person name="Grover J.R."/>
            <person name="Yang Z."/>
            <person name="Poulos S."/>
            <person name="McIntire W.E."/>
            <person name="Tatham E.A."/>
            <person name="Erramilli S.K."/>
            <person name="Nosol K."/>
            <person name="Lai K.K."/>
            <person name="Ding S."/>
            <person name="Lu M."/>
            <person name="Uchil P.D."/>
            <person name="Finzi A."/>
            <person name="Rein A."/>
            <person name="Kossiakoff A.A."/>
            <person name="Mothes W."/>
            <person name="Yeager M."/>
        </authorList>
    </citation>
    <scope>FUNCTION</scope>
</reference>
<reference key="28">
    <citation type="journal article" date="1996" name="Cell">
        <title>Crystal structure of the conserved core of HIV-1 Nef complexed with a Src family SH3 domain.</title>
        <authorList>
            <person name="Lee C.H."/>
            <person name="Saksela K."/>
            <person name="Mirza U.A."/>
            <person name="Chait B.T."/>
            <person name="Kuriyan J."/>
        </authorList>
    </citation>
    <scope>X-RAY CRYSTALLOGRAPHY (2.5 ANGSTROMS) OF 54-205 IN COMPLEX WITH A SRC FAMILY SH3 DOMAIN</scope>
</reference>
<proteinExistence type="evidence at protein level"/>
<dbReference type="EMBL" id="K02013">
    <property type="protein sequence ID" value="AAB59752.1"/>
    <property type="molecule type" value="Genomic_RNA"/>
</dbReference>
<dbReference type="EMBL" id="M19921">
    <property type="protein sequence ID" value="AAA44993.1"/>
    <property type="molecule type" value="Genomic_RNA"/>
</dbReference>
<dbReference type="EMBL" id="A04321">
    <property type="protein sequence ID" value="CAA00353.1"/>
    <property type="molecule type" value="Unassigned_RNA"/>
</dbReference>
<dbReference type="PIR" id="A04008">
    <property type="entry name" value="ASLJFV"/>
</dbReference>
<dbReference type="PDB" id="1AVV">
    <property type="method" value="X-ray"/>
    <property type="resolution" value="3.00 A"/>
    <property type="chains" value="A=58-206"/>
</dbReference>
<dbReference type="PDB" id="1AVZ">
    <property type="method" value="X-ray"/>
    <property type="resolution" value="3.00 A"/>
    <property type="chains" value="A/B=58-206"/>
</dbReference>
<dbReference type="PDB" id="1EFN">
    <property type="method" value="X-ray"/>
    <property type="resolution" value="2.50 A"/>
    <property type="chains" value="B/D=54-205"/>
</dbReference>
<dbReference type="PDB" id="4D8D">
    <property type="method" value="X-ray"/>
    <property type="resolution" value="2.52 A"/>
    <property type="chains" value="B/D=58-204"/>
</dbReference>
<dbReference type="PDB" id="6URI">
    <property type="method" value="X-ray"/>
    <property type="resolution" value="3.00 A"/>
    <property type="chains" value="N=26-206"/>
</dbReference>
<dbReference type="PDBsum" id="1AVV"/>
<dbReference type="PDBsum" id="1AVZ"/>
<dbReference type="PDBsum" id="1EFN"/>
<dbReference type="PDBsum" id="4D8D"/>
<dbReference type="PDBsum" id="6URI"/>
<dbReference type="SMR" id="P03406"/>
<dbReference type="DIP" id="DIP-29968N"/>
<dbReference type="ELM" id="P03406"/>
<dbReference type="IntAct" id="P03406">
    <property type="interactions" value="1"/>
</dbReference>
<dbReference type="BindingDB" id="P03406"/>
<dbReference type="EvolutionaryTrace" id="P03406"/>
<dbReference type="Proteomes" id="UP000007692">
    <property type="component" value="Genome"/>
</dbReference>
<dbReference type="GO" id="GO:0005576">
    <property type="term" value="C:extracellular region"/>
    <property type="evidence" value="ECO:0007669"/>
    <property type="project" value="UniProtKB-SubCell"/>
</dbReference>
<dbReference type="GO" id="GO:0044178">
    <property type="term" value="C:host cell Golgi membrane"/>
    <property type="evidence" value="ECO:0007669"/>
    <property type="project" value="UniProtKB-SubCell"/>
</dbReference>
<dbReference type="GO" id="GO:0020002">
    <property type="term" value="C:host cell plasma membrane"/>
    <property type="evidence" value="ECO:0007669"/>
    <property type="project" value="UniProtKB-SubCell"/>
</dbReference>
<dbReference type="GO" id="GO:0016020">
    <property type="term" value="C:membrane"/>
    <property type="evidence" value="ECO:0007669"/>
    <property type="project" value="UniProtKB-UniRule"/>
</dbReference>
<dbReference type="GO" id="GO:0044423">
    <property type="term" value="C:virion component"/>
    <property type="evidence" value="ECO:0007669"/>
    <property type="project" value="UniProtKB-UniRule"/>
</dbReference>
<dbReference type="GO" id="GO:0051117">
    <property type="term" value="F:ATPase binding"/>
    <property type="evidence" value="ECO:0000353"/>
    <property type="project" value="UniProtKB"/>
</dbReference>
<dbReference type="GO" id="GO:0005516">
    <property type="term" value="F:calmodulin binding"/>
    <property type="evidence" value="ECO:0000353"/>
    <property type="project" value="UniProtKB"/>
</dbReference>
<dbReference type="GO" id="GO:0042609">
    <property type="term" value="F:CD4 receptor binding"/>
    <property type="evidence" value="ECO:0000353"/>
    <property type="project" value="UniProtKB"/>
</dbReference>
<dbReference type="GO" id="GO:0005525">
    <property type="term" value="F:GTP binding"/>
    <property type="evidence" value="ECO:0007669"/>
    <property type="project" value="UniProtKB-UniRule"/>
</dbReference>
<dbReference type="GO" id="GO:0042288">
    <property type="term" value="F:MHC class I protein binding"/>
    <property type="evidence" value="ECO:0000353"/>
    <property type="project" value="UniProtKB"/>
</dbReference>
<dbReference type="GO" id="GO:0016504">
    <property type="term" value="F:peptidase activator activity"/>
    <property type="evidence" value="ECO:0000314"/>
    <property type="project" value="GO_Central"/>
</dbReference>
<dbReference type="GO" id="GO:0019901">
    <property type="term" value="F:protein kinase binding"/>
    <property type="evidence" value="ECO:0000353"/>
    <property type="project" value="UniProtKB"/>
</dbReference>
<dbReference type="GO" id="GO:0017124">
    <property type="term" value="F:SH3 domain binding"/>
    <property type="evidence" value="ECO:0000353"/>
    <property type="project" value="UniProtKB"/>
</dbReference>
<dbReference type="GO" id="GO:0005102">
    <property type="term" value="F:signaling receptor binding"/>
    <property type="evidence" value="ECO:0000353"/>
    <property type="project" value="UniProtKB"/>
</dbReference>
<dbReference type="GO" id="GO:0031996">
    <property type="term" value="F:thioesterase binding"/>
    <property type="evidence" value="ECO:0000353"/>
    <property type="project" value="UniProtKB"/>
</dbReference>
<dbReference type="GO" id="GO:0010561">
    <property type="term" value="P:negative regulation of glycoprotein biosynthetic process"/>
    <property type="evidence" value="ECO:0000314"/>
    <property type="project" value="UniProtKB"/>
</dbReference>
<dbReference type="GO" id="GO:0050848">
    <property type="term" value="P:regulation of calcium-mediated signaling"/>
    <property type="evidence" value="ECO:0000314"/>
    <property type="project" value="UniProtKB"/>
</dbReference>
<dbReference type="GO" id="GO:0050863">
    <property type="term" value="P:regulation of T cell activation"/>
    <property type="evidence" value="ECO:0000303"/>
    <property type="project" value="UniProtKB"/>
</dbReference>
<dbReference type="GO" id="GO:0046776">
    <property type="term" value="P:symbiont-mediated suppression of host antigen processing and presentation of peptide antigen via MHC class I"/>
    <property type="evidence" value="ECO:0000314"/>
    <property type="project" value="UniProtKB"/>
</dbReference>
<dbReference type="GO" id="GO:0039505">
    <property type="term" value="P:symbiont-mediated suppression of host antigen processing and presentation of peptide antigen via MHC class II"/>
    <property type="evidence" value="ECO:0007669"/>
    <property type="project" value="UniProtKB-UniRule"/>
</dbReference>
<dbReference type="GO" id="GO:0033668">
    <property type="term" value="P:symbiont-mediated suppression of host apoptosis"/>
    <property type="evidence" value="ECO:0000314"/>
    <property type="project" value="UniProtKB"/>
</dbReference>
<dbReference type="GO" id="GO:0140321">
    <property type="term" value="P:symbiont-mediated suppression of host autophagy"/>
    <property type="evidence" value="ECO:0007669"/>
    <property type="project" value="UniProtKB-KW"/>
</dbReference>
<dbReference type="GO" id="GO:0052170">
    <property type="term" value="P:symbiont-mediated suppression of host innate immune response"/>
    <property type="evidence" value="ECO:0000314"/>
    <property type="project" value="UniProtKB"/>
</dbReference>
<dbReference type="GO" id="GO:0019058">
    <property type="term" value="P:viral life cycle"/>
    <property type="evidence" value="ECO:0000314"/>
    <property type="project" value="UniProtKB"/>
</dbReference>
<dbReference type="DisProt" id="DP00048"/>
<dbReference type="FunFam" id="3.30.62.10:FF:000001">
    <property type="entry name" value="Protein Nef"/>
    <property type="match status" value="1"/>
</dbReference>
<dbReference type="FunFam" id="4.10.890.10:FF:000001">
    <property type="entry name" value="Protein Nef"/>
    <property type="match status" value="1"/>
</dbReference>
<dbReference type="Gene3D" id="4.10.890.10">
    <property type="entry name" value="HIV 1 nef anchor domain"/>
    <property type="match status" value="1"/>
</dbReference>
<dbReference type="Gene3D" id="3.30.62.10">
    <property type="entry name" value="Nef Regulatory Factor"/>
    <property type="match status" value="1"/>
</dbReference>
<dbReference type="HAMAP" id="MF_04078">
    <property type="entry name" value="NEF_HIV"/>
    <property type="match status" value="1"/>
</dbReference>
<dbReference type="IDEAL" id="IID90018"/>
<dbReference type="InterPro" id="IPR027480">
    <property type="entry name" value="HIV-1_Nef_anchor_sf"/>
</dbReference>
<dbReference type="InterPro" id="IPR027481">
    <property type="entry name" value="HIV-1_Nef_core_sf"/>
</dbReference>
<dbReference type="InterPro" id="IPR001558">
    <property type="entry name" value="HIV_Nef"/>
</dbReference>
<dbReference type="Pfam" id="PF00469">
    <property type="entry name" value="F-protein"/>
    <property type="match status" value="1"/>
</dbReference>
<dbReference type="SUPFAM" id="SSF55671">
    <property type="entry name" value="Regulatory factor Nef"/>
    <property type="match status" value="1"/>
</dbReference>
<organism>
    <name type="scientific">Human immunodeficiency virus type 1 group M subtype B (isolate BRU/LAI)</name>
    <name type="common">HIV-1</name>
    <dbReference type="NCBI Taxonomy" id="11686"/>
    <lineage>
        <taxon>Viruses</taxon>
        <taxon>Riboviria</taxon>
        <taxon>Pararnavirae</taxon>
        <taxon>Artverviricota</taxon>
        <taxon>Revtraviricetes</taxon>
        <taxon>Ortervirales</taxon>
        <taxon>Retroviridae</taxon>
        <taxon>Orthoretrovirinae</taxon>
        <taxon>Lentivirus</taxon>
        <taxon>Human immunodeficiency virus type 1</taxon>
    </lineage>
</organism>